<accession>B6DCV8</accession>
<reference key="1">
    <citation type="journal article" date="2010" name="Zoology">
        <title>Transcriptome analysis of the venom glands of the Chinese wolf spider Lycosa singoriensis.</title>
        <authorList>
            <person name="Zhang Y."/>
            <person name="Chen J."/>
            <person name="Tang X."/>
            <person name="Wang F."/>
            <person name="Jiang L."/>
            <person name="Xiong X."/>
            <person name="Wang M."/>
            <person name="Rong M."/>
            <person name="Liu Z."/>
            <person name="Liang S."/>
        </authorList>
    </citation>
    <scope>NUCLEOTIDE SEQUENCE [LARGE SCALE MRNA]</scope>
    <source>
        <tissue>Venom gland</tissue>
    </source>
</reference>
<keyword id="KW-1015">Disulfide bond</keyword>
<keyword id="KW-0964">Secreted</keyword>
<keyword id="KW-0732">Signal</keyword>
<keyword id="KW-0800">Toxin</keyword>
<evidence type="ECO:0000250" key="1"/>
<evidence type="ECO:0000255" key="2"/>
<evidence type="ECO:0000305" key="3"/>
<proteinExistence type="evidence at transcript level"/>
<name>TX608_LYCSI</name>
<organism>
    <name type="scientific">Lycosa singoriensis</name>
    <name type="common">Wolf spider</name>
    <name type="synonym">Aranea singoriensis</name>
    <dbReference type="NCBI Taxonomy" id="434756"/>
    <lineage>
        <taxon>Eukaryota</taxon>
        <taxon>Metazoa</taxon>
        <taxon>Ecdysozoa</taxon>
        <taxon>Arthropoda</taxon>
        <taxon>Chelicerata</taxon>
        <taxon>Arachnida</taxon>
        <taxon>Araneae</taxon>
        <taxon>Araneomorphae</taxon>
        <taxon>Entelegynae</taxon>
        <taxon>Lycosoidea</taxon>
        <taxon>Lycosidae</taxon>
        <taxon>Lycosa</taxon>
    </lineage>
</organism>
<protein>
    <recommendedName>
        <fullName>U6-lycotoxin-Ls1g</fullName>
    </recommendedName>
    <alternativeName>
        <fullName>Toxin-like structure LSTX-F8</fullName>
    </alternativeName>
</protein>
<feature type="signal peptide" evidence="2">
    <location>
        <begin position="1"/>
        <end position="21"/>
    </location>
</feature>
<feature type="propeptide" id="PRO_0000401737" evidence="1">
    <location>
        <begin position="22"/>
        <end position="25"/>
    </location>
</feature>
<feature type="chain" id="PRO_0000401738" description="U6-lycotoxin-Ls1g">
    <location>
        <begin position="26"/>
        <end position="75"/>
    </location>
</feature>
<comment type="subcellular location">
    <subcellularLocation>
        <location evidence="1">Secreted</location>
    </subcellularLocation>
</comment>
<comment type="tissue specificity">
    <text>Expressed by the venom gland.</text>
</comment>
<comment type="PTM">
    <text evidence="1">Contains 4 disulfide bonds.</text>
</comment>
<comment type="similarity">
    <text evidence="3">Belongs to the neurotoxin 19 (CSTX) family. 06 (U6-Lctx) subfamily.</text>
</comment>
<dbReference type="EMBL" id="EU926042">
    <property type="protein sequence ID" value="ACI41374.1"/>
    <property type="molecule type" value="mRNA"/>
</dbReference>
<dbReference type="EMBL" id="FM864046">
    <property type="protein sequence ID" value="CAS03643.1"/>
    <property type="molecule type" value="mRNA"/>
</dbReference>
<dbReference type="SMR" id="B6DCV8"/>
<dbReference type="ArachnoServer" id="AS000980">
    <property type="toxin name" value="U6-lycotoxin-Ls1g"/>
</dbReference>
<dbReference type="GO" id="GO:0005576">
    <property type="term" value="C:extracellular region"/>
    <property type="evidence" value="ECO:0007669"/>
    <property type="project" value="UniProtKB-SubCell"/>
</dbReference>
<dbReference type="GO" id="GO:0090729">
    <property type="term" value="F:toxin activity"/>
    <property type="evidence" value="ECO:0007669"/>
    <property type="project" value="UniProtKB-KW"/>
</dbReference>
<dbReference type="InterPro" id="IPR019553">
    <property type="entry name" value="Spider_toxin_CSTX_knottin"/>
</dbReference>
<dbReference type="Pfam" id="PF10530">
    <property type="entry name" value="Toxin_35"/>
    <property type="match status" value="1"/>
</dbReference>
<sequence length="75" mass="8388">MKLLLFTALVLVVISLIEVEAENERACIPLEKECTKTPGNCCSGLKCDCYRRFEQGVAKGVQCWCIEKDVTYKGV</sequence>